<protein>
    <recommendedName>
        <fullName evidence="5">Lipid A 4'-phosphatase</fullName>
        <ecNumber evidence="6">3.1.-.-</ecNumber>
    </recommendedName>
</protein>
<keyword id="KW-0046">Antibiotic resistance</keyword>
<keyword id="KW-0997">Cell inner membrane</keyword>
<keyword id="KW-1003">Cell membrane</keyword>
<keyword id="KW-0378">Hydrolase</keyword>
<keyword id="KW-0441">Lipid A biosynthesis</keyword>
<keyword id="KW-0444">Lipid biosynthesis</keyword>
<keyword id="KW-0443">Lipid metabolism</keyword>
<keyword id="KW-0448">Lipopolysaccharide biosynthesis</keyword>
<keyword id="KW-0472">Membrane</keyword>
<keyword id="KW-0812">Transmembrane</keyword>
<keyword id="KW-1133">Transmembrane helix</keyword>
<keyword id="KW-0843">Virulence</keyword>
<accession>A0Q4N6</accession>
<accession>Q1WDN3</accession>
<evidence type="ECO:0000255" key="1"/>
<evidence type="ECO:0000269" key="2">
    <source>
    </source>
</evidence>
<evidence type="ECO:0000269" key="3">
    <source>
    </source>
</evidence>
<evidence type="ECO:0000269" key="4">
    <source>
    </source>
</evidence>
<evidence type="ECO:0000303" key="5">
    <source>
    </source>
</evidence>
<evidence type="ECO:0000305" key="6"/>
<evidence type="ECO:0000305" key="7">
    <source>
    </source>
</evidence>
<evidence type="ECO:0000305" key="8">
    <source>
    </source>
</evidence>
<proteinExistence type="inferred from homology"/>
<sequence length="222" mass="25552">MARFHIILGLVVCFFAWIFFLIFPNLDIQFAGHFYNSSAHQFIGGYDGFLGFLHWFARFFPIFFSIIVILFLLGSLFIDKFKIKYRKAIFFIAVCLWIGPGLVVNYVFKDHWGRPRPVMVEQFNGDKIFQPPFVISSQCDKNCSFVCGDASMGFWLFAFMPLLATRKKKLVAFIAAVVAGGGLGLMRMSQGGHFFSDVVFCGIFVYISTWVVYALMYRKKEY</sequence>
<gene>
    <name evidence="5" type="primary">lpxF</name>
    <name type="ordered locus">FTN_0295</name>
    <name type="ORF">AW25_1746</name>
</gene>
<comment type="function">
    <text evidence="2 4">Removes the 4'-phosphate moiety from lipid IV(A) (a tetraacylated precursor of lipid A) and from pentaacylated lipid A, but not from hexaacylated lipid A (as is found in E.coli). Does not dephosphorylate phosphatidic acid, phosphatidylglycerophosphate, or the 1-phosphate group of lipid A and lipid A precursors. Its expression in E.coli confers resistance to the cationic antimicrobial peptide (CAMP) polymyxin B (PubMed:16467300). Plays a critical role in the ability of the bacteria to avoid the host's innate immune system, especially the bactericidal action of CAMPs, although whether it is CAMP-sensitivity or increased sensitivity to the immune system is not clear (PubMed:17360489).</text>
</comment>
<comment type="pathway">
    <text evidence="6">Bacterial outer membrane biogenesis; LPS lipid A biosynthesis.</text>
</comment>
<comment type="subcellular location">
    <subcellularLocation>
        <location evidence="7 8">Cell inner membrane</location>
        <topology evidence="1">Multi-pass membrane protein</topology>
    </subcellularLocation>
    <text evidence="2">Activity depends on msbA function when expressed in E.coli, strongly suggesting this protein acts in the periplasm (MsbA flips the lipopolysaccharide precursor across the cell inner membrane).</text>
</comment>
<comment type="disruption phenotype">
    <text evidence="4">Lipid A retains the 4'-phosphate group (giving bi-phosphorylated lipid A) and a 3'-hydroxyacyl chain not usually seen in wild-type cells. Cells grow more slowly in liquid culture and are more sensitive to the CAMP polymyxin B. Bacteria are avirulent upon infection of C57BL/6 mice, the natural host of this bacterium; they do not colonize mouse spleen. Upon mouse intraperitoneal injection induces pro-inflammatory cytokine IL-6 and monocyte chemoattractant protein 1 and keratinocyte-derived chemokine, two potent chemoattractants; bacterial viability decreases about 100-fold.</text>
</comment>
<comment type="miscellaneous">
    <text evidence="3 4">In Francisella lipid A is mono-phosphorylated at position 1- and tetraacylated, it lacks the 4'-phosphate residue found in E.coli (PubMed:17263332, PubMed:17360489). More than 90% of lipid A is in a free form that lacks core oligosaccharide and O-antigen (PubMed:17360489).</text>
</comment>
<comment type="similarity">
    <text evidence="6">Belongs to the lipid A LpxF 4'-phosphatase family.</text>
</comment>
<name>LPXF_FRATN</name>
<feature type="chain" id="PRO_0000432495" description="Lipid A 4'-phosphatase">
    <location>
        <begin position="1"/>
        <end position="222"/>
    </location>
</feature>
<feature type="topological domain" description="Cytoplasmic" evidence="6">
    <location>
        <begin position="1"/>
        <end position="3"/>
    </location>
</feature>
<feature type="transmembrane region" description="Helical; Name=1" evidence="1">
    <location>
        <begin position="4"/>
        <end position="24"/>
    </location>
</feature>
<feature type="topological domain" description="Periplasmic" evidence="6">
    <location>
        <begin position="25"/>
        <end position="58"/>
    </location>
</feature>
<feature type="transmembrane region" description="Helical; Name=2" evidence="1">
    <location>
        <begin position="59"/>
        <end position="79"/>
    </location>
</feature>
<feature type="topological domain" description="Cytoplasmic" evidence="6">
    <location>
        <begin position="80"/>
        <end position="87"/>
    </location>
</feature>
<feature type="transmembrane region" description="Helical; Name=3" evidence="1">
    <location>
        <begin position="88"/>
        <end position="108"/>
    </location>
</feature>
<feature type="topological domain" description="Periplasmic" evidence="6">
    <location>
        <begin position="109"/>
        <end position="144"/>
    </location>
</feature>
<feature type="transmembrane region" description="Helical; Name=4" evidence="1">
    <location>
        <begin position="145"/>
        <end position="165"/>
    </location>
</feature>
<feature type="topological domain" description="Cytoplasmic" evidence="6">
    <location>
        <begin position="166"/>
        <end position="169"/>
    </location>
</feature>
<feature type="transmembrane region" description="Helical; Name=5" evidence="1">
    <location>
        <begin position="170"/>
        <end position="190"/>
    </location>
</feature>
<feature type="topological domain" description="Periplasmic" evidence="6">
    <location>
        <begin position="191"/>
        <end position="193"/>
    </location>
</feature>
<feature type="transmembrane region" description="Helical; Name=6" evidence="1">
    <location>
        <begin position="194"/>
        <end position="214"/>
    </location>
</feature>
<feature type="topological domain" description="Cytoplasmic" evidence="6">
    <location>
        <begin position="215"/>
        <end position="222"/>
    </location>
</feature>
<organism>
    <name type="scientific">Francisella tularensis subsp. novicida (strain U112)</name>
    <dbReference type="NCBI Taxonomy" id="401614"/>
    <lineage>
        <taxon>Bacteria</taxon>
        <taxon>Pseudomonadati</taxon>
        <taxon>Pseudomonadota</taxon>
        <taxon>Gammaproteobacteria</taxon>
        <taxon>Thiotrichales</taxon>
        <taxon>Francisellaceae</taxon>
        <taxon>Francisella</taxon>
    </lineage>
</organism>
<dbReference type="EC" id="3.1.-.-" evidence="6"/>
<dbReference type="EMBL" id="DQ364143">
    <property type="protein sequence ID" value="ABC96319.1"/>
    <property type="molecule type" value="Genomic_DNA"/>
</dbReference>
<dbReference type="EMBL" id="CP000439">
    <property type="protein sequence ID" value="ABK89201.1"/>
    <property type="molecule type" value="Genomic_DNA"/>
</dbReference>
<dbReference type="EMBL" id="CP009633">
    <property type="protein sequence ID" value="AJI61280.1"/>
    <property type="molecule type" value="Genomic_DNA"/>
</dbReference>
<dbReference type="RefSeq" id="WP_003032934.1">
    <property type="nucleotide sequence ID" value="NZ_CP009633.1"/>
</dbReference>
<dbReference type="GeneID" id="75264203"/>
<dbReference type="KEGG" id="ftn:FTN_0295"/>
<dbReference type="KEGG" id="ftx:AW25_1746"/>
<dbReference type="HOGENOM" id="CLU_070327_1_1_6"/>
<dbReference type="BioCyc" id="FTUL401614:G1G75-306-MONOMER"/>
<dbReference type="UniPathway" id="UPA00973"/>
<dbReference type="Proteomes" id="UP000000762">
    <property type="component" value="Chromosome"/>
</dbReference>
<dbReference type="GO" id="GO:0005886">
    <property type="term" value="C:plasma membrane"/>
    <property type="evidence" value="ECO:0007669"/>
    <property type="project" value="UniProtKB-SubCell"/>
</dbReference>
<dbReference type="GO" id="GO:0016787">
    <property type="term" value="F:hydrolase activity"/>
    <property type="evidence" value="ECO:0007669"/>
    <property type="project" value="UniProtKB-KW"/>
</dbReference>
<dbReference type="GO" id="GO:0009245">
    <property type="term" value="P:lipid A biosynthetic process"/>
    <property type="evidence" value="ECO:0007669"/>
    <property type="project" value="UniProtKB-UniPathway"/>
</dbReference>
<dbReference type="GO" id="GO:0009103">
    <property type="term" value="P:lipopolysaccharide biosynthetic process"/>
    <property type="evidence" value="ECO:0007669"/>
    <property type="project" value="UniProtKB-KW"/>
</dbReference>
<dbReference type="GO" id="GO:0046677">
    <property type="term" value="P:response to antibiotic"/>
    <property type="evidence" value="ECO:0007669"/>
    <property type="project" value="UniProtKB-KW"/>
</dbReference>
<dbReference type="CDD" id="cd03396">
    <property type="entry name" value="PAP2_like_6"/>
    <property type="match status" value="1"/>
</dbReference>
<dbReference type="Gene3D" id="1.20.144.10">
    <property type="entry name" value="Phosphatidic acid phosphatase type 2/haloperoxidase"/>
    <property type="match status" value="1"/>
</dbReference>
<dbReference type="InterPro" id="IPR054677">
    <property type="entry name" value="LpxF"/>
</dbReference>
<dbReference type="InterPro" id="IPR036938">
    <property type="entry name" value="P_Acid_Pase_2/haloperoxi_sf"/>
</dbReference>
<dbReference type="InterPro" id="IPR000326">
    <property type="entry name" value="P_Acid_Pase_2/haloperoxidase"/>
</dbReference>
<dbReference type="NCBIfam" id="NF045633">
    <property type="entry name" value="LipidAPhtaseLpxF"/>
    <property type="match status" value="1"/>
</dbReference>
<dbReference type="Pfam" id="PF01569">
    <property type="entry name" value="PAP2"/>
    <property type="match status" value="1"/>
</dbReference>
<dbReference type="SUPFAM" id="SSF48317">
    <property type="entry name" value="Acid phosphatase/Vanadium-dependent haloperoxidase"/>
    <property type="match status" value="1"/>
</dbReference>
<reference key="1">
    <citation type="journal article" date="2006" name="J. Biol. Chem.">
        <title>Expression cloning and periplasmic orientation of the Francisella novicida lipid A 4'-phosphatase LpxF.</title>
        <authorList>
            <person name="Wang X."/>
            <person name="McGrath S.C."/>
            <person name="Cotter R.J."/>
            <person name="Raetz C.R."/>
        </authorList>
    </citation>
    <scope>NUCLEOTIDE SEQUENCE [GENOMIC DNA]</scope>
    <scope>FUNCTION</scope>
    <scope>SUBSTRATE SPECIFICITY</scope>
    <scope>SUBCELLULAR LOCATION</scope>
    <scope>EXPRESSION IN E.COLI</scope>
    <scope>ANTIBIOTIC RESISTANCE</scope>
    <source>
        <strain>U112</strain>
    </source>
</reference>
<reference key="2">
    <citation type="journal article" date="2007" name="Genome Biol.">
        <title>Comparison of Francisella tularensis genomes reveals evolutionary events associated with the emergence of human pathogenic strains.</title>
        <authorList>
            <person name="Rohmer L."/>
            <person name="Fong C."/>
            <person name="Abmayr S."/>
            <person name="Wasnick M."/>
            <person name="Larson Freeman T.J."/>
            <person name="Radey M."/>
            <person name="Guina T."/>
            <person name="Svensson K."/>
            <person name="Hayden H.S."/>
            <person name="Jacobs M."/>
            <person name="Gallagher L.A."/>
            <person name="Manoil C."/>
            <person name="Ernst R.K."/>
            <person name="Drees B."/>
            <person name="Buckley D."/>
            <person name="Haugen E."/>
            <person name="Bovee D."/>
            <person name="Zhou Y."/>
            <person name="Chang J."/>
            <person name="Levy R."/>
            <person name="Lim R."/>
            <person name="Gillett W."/>
            <person name="Guenthener D."/>
            <person name="Kang A."/>
            <person name="Shaffer S.A."/>
            <person name="Taylor G."/>
            <person name="Chen J."/>
            <person name="Gallis B."/>
            <person name="D'Argenio D.A."/>
            <person name="Forsman M."/>
            <person name="Olson M.V."/>
            <person name="Goodlett D.R."/>
            <person name="Kaul R."/>
            <person name="Miller S.I."/>
            <person name="Brittnacher M.J."/>
        </authorList>
    </citation>
    <scope>NUCLEOTIDE SEQUENCE [LARGE SCALE GENOMIC DNA]</scope>
    <source>
        <strain>U112</strain>
    </source>
</reference>
<reference key="3">
    <citation type="submission" date="2014-10" db="EMBL/GenBank/DDBJ databases">
        <authorList>
            <person name="Bishop-Lilly K.A."/>
            <person name="Broomall S.M."/>
            <person name="Chain P.S."/>
            <person name="Chertkov O."/>
            <person name="Coyne S.R."/>
            <person name="Daligault H.E."/>
            <person name="Davenport K.W."/>
            <person name="Erkkila T."/>
            <person name="Frey K.G."/>
            <person name="Gibbons H.S."/>
            <person name="Gu W."/>
            <person name="Jaissle J."/>
            <person name="Johnson S.L."/>
            <person name="Koroleva G.I."/>
            <person name="Ladner J.T."/>
            <person name="Lo C.-C."/>
            <person name="Minogue T.D."/>
            <person name="Munk C."/>
            <person name="Palacios G.F."/>
            <person name="Redden C.L."/>
            <person name="Rosenzweig C.N."/>
            <person name="Scholz M.B."/>
            <person name="Teshima H."/>
            <person name="Xu Y."/>
        </authorList>
    </citation>
    <scope>NUCLEOTIDE SEQUENCE [LARGE SCALE GENOMIC DNA]</scope>
    <source>
        <strain>U112</strain>
    </source>
</reference>
<reference key="4">
    <citation type="journal article" date="2007" name="Anal. Chem.">
        <title>Characterization of lipid A acylation patterns in Francisella tularensis, Francisella novicida, and Francisella philomiragia using multiple-stage mass spectrometry and matrix-assisted laser desorption/ionization on an intermediate vacuum source linear ion trap.</title>
        <authorList>
            <person name="Schilling B."/>
            <person name="McLendon M.K."/>
            <person name="Phillips N.J."/>
            <person name="Apicella M.A."/>
            <person name="Gibson B.W."/>
        </authorList>
    </citation>
    <scope>LIPID A STRUCTURE</scope>
    <source>
        <strain>U112</strain>
    </source>
</reference>
<reference key="5">
    <citation type="journal article" date="2007" name="Proc. Natl. Acad. Sci. U.S.A.">
        <title>Attenuated virulence of a Francisella mutant lacking the lipid A 4'-phosphatase.</title>
        <authorList>
            <person name="Wang X."/>
            <person name="Ribeiro A.A."/>
            <person name="Guan Z."/>
            <person name="Abraham S.N."/>
            <person name="Raetz C.R."/>
        </authorList>
    </citation>
    <scope>FUNCTION</scope>
    <scope>SUBCELLULAR LOCATION</scope>
    <scope>DISRUPTION PHENOTYPE</scope>
    <scope>LIPID A STRUCTURE</scope>
    <scope>ANTIBIOTIC RESISTANCE</scope>
    <source>
        <strain>U112</strain>
    </source>
</reference>